<evidence type="ECO:0000255" key="1">
    <source>
        <dbReference type="HAMAP-Rule" id="MF_01393"/>
    </source>
</evidence>
<comment type="function">
    <text evidence="1">Key component of the proton channel; it plays a direct role in the translocation of protons across the membrane.</text>
</comment>
<comment type="subunit">
    <text evidence="1">F-type ATPases have 2 components, CF(1) - the catalytic core - and CF(0) - the membrane proton channel. CF(1) has five subunits: alpha(3), beta(3), gamma(1), delta(1), epsilon(1). CF(0) has four main subunits: a, b, b' and c.</text>
</comment>
<comment type="subcellular location">
    <subcellularLocation>
        <location evidence="1">Plastid</location>
        <location evidence="1">Chloroplast thylakoid membrane</location>
        <topology evidence="1">Multi-pass membrane protein</topology>
    </subcellularLocation>
</comment>
<comment type="similarity">
    <text evidence="1">Belongs to the ATPase A chain family.</text>
</comment>
<name>ATPI_CHAGL</name>
<keyword id="KW-0066">ATP synthesis</keyword>
<keyword id="KW-0138">CF(0)</keyword>
<keyword id="KW-0150">Chloroplast</keyword>
<keyword id="KW-0375">Hydrogen ion transport</keyword>
<keyword id="KW-0406">Ion transport</keyword>
<keyword id="KW-0472">Membrane</keyword>
<keyword id="KW-0934">Plastid</keyword>
<keyword id="KW-0793">Thylakoid</keyword>
<keyword id="KW-0812">Transmembrane</keyword>
<keyword id="KW-1133">Transmembrane helix</keyword>
<keyword id="KW-0813">Transport</keyword>
<feature type="chain" id="PRO_0000362538" description="ATP synthase subunit a, chloroplastic">
    <location>
        <begin position="1"/>
        <end position="243"/>
    </location>
</feature>
<feature type="transmembrane region" description="Helical" evidence="1">
    <location>
        <begin position="32"/>
        <end position="52"/>
    </location>
</feature>
<feature type="transmembrane region" description="Helical" evidence="1">
    <location>
        <begin position="91"/>
        <end position="111"/>
    </location>
</feature>
<feature type="transmembrane region" description="Helical" evidence="1">
    <location>
        <begin position="130"/>
        <end position="150"/>
    </location>
</feature>
<feature type="transmembrane region" description="Helical" evidence="1">
    <location>
        <begin position="195"/>
        <end position="215"/>
    </location>
</feature>
<feature type="transmembrane region" description="Helical" evidence="1">
    <location>
        <begin position="216"/>
        <end position="236"/>
    </location>
</feature>
<dbReference type="EMBL" id="AF494278">
    <property type="protein sequence ID" value="AAM96504.1"/>
    <property type="molecule type" value="Genomic_DNA"/>
</dbReference>
<dbReference type="RefSeq" id="NP_683778.1">
    <property type="nucleotide sequence ID" value="NC_004115.1"/>
</dbReference>
<dbReference type="SMR" id="Q8MA08"/>
<dbReference type="GeneID" id="860680"/>
<dbReference type="GO" id="GO:0009535">
    <property type="term" value="C:chloroplast thylakoid membrane"/>
    <property type="evidence" value="ECO:0007669"/>
    <property type="project" value="UniProtKB-SubCell"/>
</dbReference>
<dbReference type="GO" id="GO:0005886">
    <property type="term" value="C:plasma membrane"/>
    <property type="evidence" value="ECO:0007669"/>
    <property type="project" value="UniProtKB-UniRule"/>
</dbReference>
<dbReference type="GO" id="GO:0045259">
    <property type="term" value="C:proton-transporting ATP synthase complex"/>
    <property type="evidence" value="ECO:0007669"/>
    <property type="project" value="UniProtKB-KW"/>
</dbReference>
<dbReference type="GO" id="GO:0046933">
    <property type="term" value="F:proton-transporting ATP synthase activity, rotational mechanism"/>
    <property type="evidence" value="ECO:0007669"/>
    <property type="project" value="UniProtKB-UniRule"/>
</dbReference>
<dbReference type="CDD" id="cd00310">
    <property type="entry name" value="ATP-synt_Fo_a_6"/>
    <property type="match status" value="1"/>
</dbReference>
<dbReference type="FunFam" id="1.20.120.220:FF:000001">
    <property type="entry name" value="ATP synthase subunit a, chloroplastic"/>
    <property type="match status" value="1"/>
</dbReference>
<dbReference type="Gene3D" id="1.20.120.220">
    <property type="entry name" value="ATP synthase, F0 complex, subunit A"/>
    <property type="match status" value="1"/>
</dbReference>
<dbReference type="HAMAP" id="MF_01393">
    <property type="entry name" value="ATP_synth_a_bact"/>
    <property type="match status" value="1"/>
</dbReference>
<dbReference type="InterPro" id="IPR045082">
    <property type="entry name" value="ATP_syn_F0_a_bact/chloroplast"/>
</dbReference>
<dbReference type="InterPro" id="IPR000568">
    <property type="entry name" value="ATP_synth_F0_asu"/>
</dbReference>
<dbReference type="InterPro" id="IPR023011">
    <property type="entry name" value="ATP_synth_F0_asu_AS"/>
</dbReference>
<dbReference type="InterPro" id="IPR035908">
    <property type="entry name" value="F0_ATP_A_sf"/>
</dbReference>
<dbReference type="NCBIfam" id="TIGR01131">
    <property type="entry name" value="ATP_synt_6_or_A"/>
    <property type="match status" value="1"/>
</dbReference>
<dbReference type="PANTHER" id="PTHR42823">
    <property type="entry name" value="ATP SYNTHASE SUBUNIT A, CHLOROPLASTIC"/>
    <property type="match status" value="1"/>
</dbReference>
<dbReference type="PANTHER" id="PTHR42823:SF3">
    <property type="entry name" value="ATP SYNTHASE SUBUNIT A, CHLOROPLASTIC"/>
    <property type="match status" value="1"/>
</dbReference>
<dbReference type="Pfam" id="PF00119">
    <property type="entry name" value="ATP-synt_A"/>
    <property type="match status" value="1"/>
</dbReference>
<dbReference type="PRINTS" id="PR00123">
    <property type="entry name" value="ATPASEA"/>
</dbReference>
<dbReference type="SUPFAM" id="SSF81336">
    <property type="entry name" value="F1F0 ATP synthase subunit A"/>
    <property type="match status" value="1"/>
</dbReference>
<dbReference type="PROSITE" id="PS00449">
    <property type="entry name" value="ATPASE_A"/>
    <property type="match status" value="1"/>
</dbReference>
<accession>Q8MA08</accession>
<reference key="1">
    <citation type="journal article" date="2002" name="Proc. Natl. Acad. Sci. U.S.A.">
        <title>The chloroplast and mitochondrial genome sequences of the charophyte Chaetosphaeridium globosum: insights into the timing of the events that restructured organelle DNAs within the green algal lineage that led to land plants.</title>
        <authorList>
            <person name="Turmel M."/>
            <person name="Otis C."/>
            <person name="Lemieux C."/>
        </authorList>
    </citation>
    <scope>NUCLEOTIDE SEQUENCE [LARGE SCALE GENOMIC DNA]</scope>
    <source>
        <strain>M1311</strain>
    </source>
</reference>
<proteinExistence type="inferred from homology"/>
<geneLocation type="chloroplast"/>
<organism>
    <name type="scientific">Chaetosphaeridium globosum</name>
    <name type="common">Charophycean green alga</name>
    <name type="synonym">Herposteiron globosum</name>
    <dbReference type="NCBI Taxonomy" id="96477"/>
    <lineage>
        <taxon>Eukaryota</taxon>
        <taxon>Viridiplantae</taxon>
        <taxon>Streptophyta</taxon>
        <taxon>Coleochaetophyceae</taxon>
        <taxon>Coleochaetales</taxon>
        <taxon>Chaetosphaeridiaceae</taxon>
        <taxon>Chaetosphaeridium</taxon>
    </lineage>
</organism>
<sequence length="243" mass="27110">MQQNHESLLFQLSSVEVGQHYYWNIGSFQVHAQVLITSWFVLGLLLGIALIATRKLETIPNTTQNFIEYVLEFIRDLTRTQIGEEEYRSWIPFVGTLFLFIFVSNWSGALIPWKVIELPNGELAAPTNDINTTVALALLTSVAYFYAGLNKKGLSYFGKYIQPTPVLLPINILEDFTKPLSLSFRLFGNILADELVVAVLVSLVPLVIPVPMMFLGLFTSGIQALIFATLAGAYIGESLEGHH</sequence>
<gene>
    <name evidence="1" type="primary">atpI</name>
</gene>
<protein>
    <recommendedName>
        <fullName evidence="1">ATP synthase subunit a, chloroplastic</fullName>
    </recommendedName>
    <alternativeName>
        <fullName evidence="1">ATP synthase F0 sector subunit a</fullName>
    </alternativeName>
    <alternativeName>
        <fullName evidence="1">F-ATPase subunit IV</fullName>
    </alternativeName>
</protein>